<proteinExistence type="inferred from homology"/>
<protein>
    <recommendedName>
        <fullName evidence="6">Lytic polysaccharide monooxygenase-like protein X325</fullName>
        <shortName evidence="6">LPMO-like protein X325</shortName>
    </recommendedName>
    <alternativeName>
        <fullName evidence="6">X325 family protein</fullName>
    </alternativeName>
</protein>
<feature type="signal peptide" evidence="4">
    <location>
        <begin position="1"/>
        <end position="24"/>
    </location>
</feature>
<feature type="chain" id="PRO_0000460004" description="Lytic polysaccharide monooxygenase-like protein X325">
    <location>
        <begin position="25"/>
        <end position="214"/>
    </location>
</feature>
<feature type="propeptide" id="PRO_0000459756" description="Removed in mature form" evidence="4">
    <location>
        <begin position="215"/>
        <end position="239"/>
    </location>
</feature>
<feature type="binding site" evidence="1">
    <location>
        <position position="25"/>
    </location>
    <ligand>
        <name>Cu(2+)</name>
        <dbReference type="ChEBI" id="CHEBI:29036"/>
    </ligand>
</feature>
<feature type="lipid moiety-binding region" description="GPI-anchor amidated serine" evidence="4">
    <location>
        <position position="214"/>
    </location>
</feature>
<feature type="glycosylation site" description="N-linked (GlcNAc...) asparagine" evidence="5">
    <location>
        <position position="41"/>
    </location>
</feature>
<feature type="glycosylation site" description="N-linked (GlcNAc...) asparagine" evidence="5">
    <location>
        <position position="56"/>
    </location>
</feature>
<feature type="glycosylation site" description="N-linked (GlcNAc...) asparagine" evidence="5">
    <location>
        <position position="79"/>
    </location>
</feature>
<feature type="glycosylation site" description="N-linked (GlcNAc...) asparagine" evidence="5">
    <location>
        <position position="117"/>
    </location>
</feature>
<feature type="glycosylation site" description="N-linked (GlcNAc...) asparagine" evidence="5">
    <location>
        <position position="150"/>
    </location>
</feature>
<feature type="glycosylation site" description="N-linked (GlcNAc...) asparagine" evidence="5">
    <location>
        <position position="197"/>
    </location>
</feature>
<feature type="disulfide bond" evidence="1">
    <location>
        <begin position="71"/>
        <end position="176"/>
    </location>
</feature>
<feature type="disulfide bond" evidence="1">
    <location>
        <begin position="141"/>
        <end position="195"/>
    </location>
</feature>
<name>X325_ASPFU</name>
<comment type="function">
    <text evidence="2 3 8">Lytic polysaccharide monooxygenase-like protein that has diverged to biological functions other than polysaccharide degradation since it does not perform oxidative cleavage of polysaccharides (Probable). Acts as a cell surface-bound protein that functions in the copper-accumulation pathway (By similarity). May also act as the major cell wall sensor that regulates MAP kinase-dependent hyphal anastomosis, the fusion of hyphal cells (By similarity).</text>
</comment>
<comment type="cofactor">
    <cofactor evidence="1">
        <name>Cu(2+)</name>
        <dbReference type="ChEBI" id="CHEBI:29036"/>
    </cofactor>
    <text evidence="1">Binds 1 copper ion per subunit.</text>
</comment>
<comment type="subcellular location">
    <subcellularLocation>
        <location evidence="4">Cell membrane</location>
        <topology evidence="4">Lipid-anchor</topology>
        <topology evidence="4">GPI-anchor</topology>
    </subcellularLocation>
    <text evidence="8">Proteins attached to a GPI anchor via their C terminus are found in the outer leaflet of the lipid bilayer facing the extracellular environment. GPI anchors can also be considered as predetermined breaking points, which allow the release of proteins into the extracellular environment upon enzymatic cleavage.</text>
</comment>
<comment type="similarity">
    <text evidence="7">Belongs to the X325 family.</text>
</comment>
<organism>
    <name type="scientific">Aspergillus fumigatus (strain ATCC MYA-4609 / CBS 101355 / FGSC A1100 / Af293)</name>
    <name type="common">Neosartorya fumigata</name>
    <dbReference type="NCBI Taxonomy" id="330879"/>
    <lineage>
        <taxon>Eukaryota</taxon>
        <taxon>Fungi</taxon>
        <taxon>Dikarya</taxon>
        <taxon>Ascomycota</taxon>
        <taxon>Pezizomycotina</taxon>
        <taxon>Eurotiomycetes</taxon>
        <taxon>Eurotiomycetidae</taxon>
        <taxon>Eurotiales</taxon>
        <taxon>Aspergillaceae</taxon>
        <taxon>Aspergillus</taxon>
        <taxon>Aspergillus subgen. Fumigati</taxon>
    </lineage>
</organism>
<accession>Q4WUK7</accession>
<evidence type="ECO:0000250" key="1">
    <source>
        <dbReference type="UniProtKB" id="A0A4P9I8G4"/>
    </source>
</evidence>
<evidence type="ECO:0000250" key="2">
    <source>
        <dbReference type="UniProtKB" id="J9VHN6"/>
    </source>
</evidence>
<evidence type="ECO:0000250" key="3">
    <source>
        <dbReference type="UniProtKB" id="V5IRP6"/>
    </source>
</evidence>
<evidence type="ECO:0000255" key="4"/>
<evidence type="ECO:0000255" key="5">
    <source>
        <dbReference type="PROSITE-ProRule" id="PRU00498"/>
    </source>
</evidence>
<evidence type="ECO:0000303" key="6">
    <source>
    </source>
</evidence>
<evidence type="ECO:0000305" key="7"/>
<evidence type="ECO:0000305" key="8">
    <source>
    </source>
</evidence>
<sequence length="239" mass="25425">MVLPSSVSQWAALIALLCAGLANAHTVITYPGYRGNNLHTNGTVEQSNGLGQAEVNGSVIFPYGMEWMYPCGGMPTTTNRTKWPVGGGAIAIQPGWFQGHQTALIYINLGLGTIPPNMSHPMVPPFQITGPTNDPYPGTICLPQVPLPANTSVKPGDHATIQVIETAKHGAALYNCVDIEFAEPSEVEEVTRDNCFNSSIISFGEVFTTTSLTSAAAPKSSLMSVLPVYMVALLSWAMM</sequence>
<keyword id="KW-1003">Cell membrane</keyword>
<keyword id="KW-0186">Copper</keyword>
<keyword id="KW-1015">Disulfide bond</keyword>
<keyword id="KW-0325">Glycoprotein</keyword>
<keyword id="KW-0336">GPI-anchor</keyword>
<keyword id="KW-0449">Lipoprotein</keyword>
<keyword id="KW-0472">Membrane</keyword>
<keyword id="KW-0479">Metal-binding</keyword>
<keyword id="KW-1185">Reference proteome</keyword>
<keyword id="KW-0732">Signal</keyword>
<reference key="1">
    <citation type="journal article" date="2005" name="Nature">
        <title>Genomic sequence of the pathogenic and allergenic filamentous fungus Aspergillus fumigatus.</title>
        <authorList>
            <person name="Nierman W.C."/>
            <person name="Pain A."/>
            <person name="Anderson M.J."/>
            <person name="Wortman J.R."/>
            <person name="Kim H.S."/>
            <person name="Arroyo J."/>
            <person name="Berriman M."/>
            <person name="Abe K."/>
            <person name="Archer D.B."/>
            <person name="Bermejo C."/>
            <person name="Bennett J.W."/>
            <person name="Bowyer P."/>
            <person name="Chen D."/>
            <person name="Collins M."/>
            <person name="Coulsen R."/>
            <person name="Davies R."/>
            <person name="Dyer P.S."/>
            <person name="Farman M.L."/>
            <person name="Fedorova N."/>
            <person name="Fedorova N.D."/>
            <person name="Feldblyum T.V."/>
            <person name="Fischer R."/>
            <person name="Fosker N."/>
            <person name="Fraser A."/>
            <person name="Garcia J.L."/>
            <person name="Garcia M.J."/>
            <person name="Goble A."/>
            <person name="Goldman G.H."/>
            <person name="Gomi K."/>
            <person name="Griffith-Jones S."/>
            <person name="Gwilliam R."/>
            <person name="Haas B.J."/>
            <person name="Haas H."/>
            <person name="Harris D.E."/>
            <person name="Horiuchi H."/>
            <person name="Huang J."/>
            <person name="Humphray S."/>
            <person name="Jimenez J."/>
            <person name="Keller N."/>
            <person name="Khouri H."/>
            <person name="Kitamoto K."/>
            <person name="Kobayashi T."/>
            <person name="Konzack S."/>
            <person name="Kulkarni R."/>
            <person name="Kumagai T."/>
            <person name="Lafton A."/>
            <person name="Latge J.-P."/>
            <person name="Li W."/>
            <person name="Lord A."/>
            <person name="Lu C."/>
            <person name="Majoros W.H."/>
            <person name="May G.S."/>
            <person name="Miller B.L."/>
            <person name="Mohamoud Y."/>
            <person name="Molina M."/>
            <person name="Monod M."/>
            <person name="Mouyna I."/>
            <person name="Mulligan S."/>
            <person name="Murphy L.D."/>
            <person name="O'Neil S."/>
            <person name="Paulsen I."/>
            <person name="Penalva M.A."/>
            <person name="Pertea M."/>
            <person name="Price C."/>
            <person name="Pritchard B.L."/>
            <person name="Quail M.A."/>
            <person name="Rabbinowitsch E."/>
            <person name="Rawlins N."/>
            <person name="Rajandream M.A."/>
            <person name="Reichard U."/>
            <person name="Renauld H."/>
            <person name="Robson G.D."/>
            <person name="Rodriguez de Cordoba S."/>
            <person name="Rodriguez-Pena J.M."/>
            <person name="Ronning C.M."/>
            <person name="Rutter S."/>
            <person name="Salzberg S.L."/>
            <person name="Sanchez M."/>
            <person name="Sanchez-Ferrero J.C."/>
            <person name="Saunders D."/>
            <person name="Seeger K."/>
            <person name="Squares R."/>
            <person name="Squares S."/>
            <person name="Takeuchi M."/>
            <person name="Tekaia F."/>
            <person name="Turner G."/>
            <person name="Vazquez de Aldana C.R."/>
            <person name="Weidman J."/>
            <person name="White O."/>
            <person name="Woodward J.R."/>
            <person name="Yu J.-H."/>
            <person name="Fraser C.M."/>
            <person name="Galagan J.E."/>
            <person name="Asai K."/>
            <person name="Machida M."/>
            <person name="Hall N."/>
            <person name="Barrell B.G."/>
            <person name="Denning D.W."/>
        </authorList>
    </citation>
    <scope>NUCLEOTIDE SEQUENCE [LARGE SCALE GENOMIC DNA]</scope>
    <source>
        <strain>ATCC MYA-4609 / CBS 101355 / FGSC A1100 / Af293</strain>
    </source>
</reference>
<reference key="2">
    <citation type="journal article" date="2020" name="Nat. Chem. Biol.">
        <title>A fungal family of lytic polysaccharide monooxygenase-like copper proteins.</title>
        <authorList>
            <person name="Labourel A."/>
            <person name="Frandsen K.E.H."/>
            <person name="Zhang F."/>
            <person name="Brouilly N."/>
            <person name="Grisel S."/>
            <person name="Haon M."/>
            <person name="Ciano L."/>
            <person name="Ropartz D."/>
            <person name="Fanuel M."/>
            <person name="Martin F."/>
            <person name="Navarro D."/>
            <person name="Rosso M.N."/>
            <person name="Tandrup T."/>
            <person name="Bissaro B."/>
            <person name="Johansen K.S."/>
            <person name="Zerva A."/>
            <person name="Walton P.H."/>
            <person name="Henrissat B."/>
            <person name="Leggio L.L."/>
            <person name="Berrin J.G."/>
        </authorList>
    </citation>
    <scope>IDENTIFICATION</scope>
    <scope>FUNCTION</scope>
</reference>
<dbReference type="EMBL" id="AAHF01000003">
    <property type="protein sequence ID" value="EAL91719.2"/>
    <property type="molecule type" value="Genomic_DNA"/>
</dbReference>
<dbReference type="RefSeq" id="XP_753757.2">
    <property type="nucleotide sequence ID" value="XM_748664.2"/>
</dbReference>
<dbReference type="SMR" id="Q4WUK7"/>
<dbReference type="STRING" id="330879.Q4WUK7"/>
<dbReference type="EnsemblFungi" id="EAL91719">
    <property type="protein sequence ID" value="EAL91719"/>
    <property type="gene ID" value="AFUA_5G08800"/>
</dbReference>
<dbReference type="GeneID" id="3510958"/>
<dbReference type="KEGG" id="afm:AFUA_5G08800"/>
<dbReference type="eggNOG" id="ENOG502SIF7">
    <property type="taxonomic scope" value="Eukaryota"/>
</dbReference>
<dbReference type="HOGENOM" id="CLU_070647_1_1_1"/>
<dbReference type="InParanoid" id="Q4WUK7"/>
<dbReference type="OMA" id="KNRTYWP"/>
<dbReference type="OrthoDB" id="5329488at2759"/>
<dbReference type="Proteomes" id="UP000002530">
    <property type="component" value="Chromosome 5"/>
</dbReference>
<dbReference type="GO" id="GO:0005886">
    <property type="term" value="C:plasma membrane"/>
    <property type="evidence" value="ECO:0007669"/>
    <property type="project" value="UniProtKB-SubCell"/>
</dbReference>
<dbReference type="GO" id="GO:0098552">
    <property type="term" value="C:side of membrane"/>
    <property type="evidence" value="ECO:0007669"/>
    <property type="project" value="UniProtKB-KW"/>
</dbReference>
<dbReference type="GO" id="GO:0046872">
    <property type="term" value="F:metal ion binding"/>
    <property type="evidence" value="ECO:0007669"/>
    <property type="project" value="UniProtKB-KW"/>
</dbReference>
<dbReference type="CDD" id="cd21176">
    <property type="entry name" value="LPMO_auxiliary-like"/>
    <property type="match status" value="1"/>
</dbReference>
<dbReference type="InterPro" id="IPR046936">
    <property type="entry name" value="BIM1-like"/>
</dbReference>
<dbReference type="InterPro" id="IPR046530">
    <property type="entry name" value="BIM1-like_dom"/>
</dbReference>
<dbReference type="PANTHER" id="PTHR34992:SF10">
    <property type="entry name" value="COPPER ACQUISITION FACTOR BIM1-LIKE DOMAIN-CONTAINING PROTEIN"/>
    <property type="match status" value="1"/>
</dbReference>
<dbReference type="PANTHER" id="PTHR34992">
    <property type="entry name" value="HYPHAL ANASTAMOSIS-7 PROTEIN"/>
    <property type="match status" value="1"/>
</dbReference>
<dbReference type="Pfam" id="PF20238">
    <property type="entry name" value="BIM1-like_dom"/>
    <property type="match status" value="1"/>
</dbReference>
<gene>
    <name evidence="6" type="primary">X325</name>
    <name type="ORF">AFUA_5G08800</name>
</gene>